<gene>
    <name type="ordered locus">Maqu_2909</name>
</gene>
<protein>
    <recommendedName>
        <fullName evidence="1">Elongation factor P-like protein</fullName>
    </recommendedName>
</protein>
<organism>
    <name type="scientific">Marinobacter nauticus (strain ATCC 700491 / DSM 11845 / VT8)</name>
    <name type="common">Marinobacter aquaeolei</name>
    <dbReference type="NCBI Taxonomy" id="351348"/>
    <lineage>
        <taxon>Bacteria</taxon>
        <taxon>Pseudomonadati</taxon>
        <taxon>Pseudomonadota</taxon>
        <taxon>Gammaproteobacteria</taxon>
        <taxon>Pseudomonadales</taxon>
        <taxon>Marinobacteraceae</taxon>
        <taxon>Marinobacter</taxon>
    </lineage>
</organism>
<sequence length="188" mass="21265">MPKASEIKKNQAVEYEGRVYFVKDIERSVPQGRAGGSLYRMRMYDVVTNQKLDETFKDSDMLNLADLVRREATFSYADGDEYVFMDTEDFTQYMLNRSAIEDELLFITEDTQGVMVILVSENPVAIDLPPTVELTIEETDPSIKGGSATARTKPARLTTGLVVQVPEHISTGDRIRVNVEERKFLSRA</sequence>
<reference key="1">
    <citation type="journal article" date="2011" name="Appl. Environ. Microbiol.">
        <title>Genomic potential of Marinobacter aquaeolei, a biogeochemical 'opportunitroph'.</title>
        <authorList>
            <person name="Singer E."/>
            <person name="Webb E.A."/>
            <person name="Nelson W.C."/>
            <person name="Heidelberg J.F."/>
            <person name="Ivanova N."/>
            <person name="Pati A."/>
            <person name="Edwards K.J."/>
        </authorList>
    </citation>
    <scope>NUCLEOTIDE SEQUENCE [LARGE SCALE GENOMIC DNA]</scope>
    <source>
        <strain>ATCC 700491 / DSM 11845 / VT8</strain>
    </source>
</reference>
<name>EFPL_MARN8</name>
<feature type="chain" id="PRO_0000384917" description="Elongation factor P-like protein">
    <location>
        <begin position="1"/>
        <end position="188"/>
    </location>
</feature>
<comment type="similarity">
    <text evidence="1">Belongs to the elongation factor P family.</text>
</comment>
<proteinExistence type="inferred from homology"/>
<evidence type="ECO:0000255" key="1">
    <source>
        <dbReference type="HAMAP-Rule" id="MF_00646"/>
    </source>
</evidence>
<accession>A1U4R4</accession>
<dbReference type="EMBL" id="CP000514">
    <property type="protein sequence ID" value="ABM19983.1"/>
    <property type="molecule type" value="Genomic_DNA"/>
</dbReference>
<dbReference type="RefSeq" id="WP_011786351.1">
    <property type="nucleotide sequence ID" value="NC_008740.1"/>
</dbReference>
<dbReference type="SMR" id="A1U4R4"/>
<dbReference type="STRING" id="351348.Maqu_2909"/>
<dbReference type="GeneID" id="31822190"/>
<dbReference type="KEGG" id="maq:Maqu_2909"/>
<dbReference type="eggNOG" id="COG0231">
    <property type="taxonomic scope" value="Bacteria"/>
</dbReference>
<dbReference type="HOGENOM" id="CLU_074944_2_0_6"/>
<dbReference type="OrthoDB" id="5599402at2"/>
<dbReference type="Proteomes" id="UP000000998">
    <property type="component" value="Chromosome"/>
</dbReference>
<dbReference type="GO" id="GO:0005737">
    <property type="term" value="C:cytoplasm"/>
    <property type="evidence" value="ECO:0007669"/>
    <property type="project" value="InterPro"/>
</dbReference>
<dbReference type="GO" id="GO:0003746">
    <property type="term" value="F:translation elongation factor activity"/>
    <property type="evidence" value="ECO:0007669"/>
    <property type="project" value="UniProtKB-UniRule"/>
</dbReference>
<dbReference type="GO" id="GO:0043043">
    <property type="term" value="P:peptide biosynthetic process"/>
    <property type="evidence" value="ECO:0007669"/>
    <property type="project" value="InterPro"/>
</dbReference>
<dbReference type="CDD" id="cd04470">
    <property type="entry name" value="S1_EF-P_repeat_1"/>
    <property type="match status" value="1"/>
</dbReference>
<dbReference type="CDD" id="cd05794">
    <property type="entry name" value="S1_EF-P_repeat_2"/>
    <property type="match status" value="1"/>
</dbReference>
<dbReference type="FunFam" id="2.40.50.140:FF:000004">
    <property type="entry name" value="Elongation factor P"/>
    <property type="match status" value="1"/>
</dbReference>
<dbReference type="FunFam" id="2.40.50.140:FF:000009">
    <property type="entry name" value="Elongation factor P"/>
    <property type="match status" value="1"/>
</dbReference>
<dbReference type="Gene3D" id="2.30.30.30">
    <property type="match status" value="1"/>
</dbReference>
<dbReference type="Gene3D" id="2.40.50.140">
    <property type="entry name" value="Nucleic acid-binding proteins"/>
    <property type="match status" value="2"/>
</dbReference>
<dbReference type="HAMAP" id="MF_00646">
    <property type="entry name" value="EFP"/>
    <property type="match status" value="1"/>
</dbReference>
<dbReference type="InterPro" id="IPR015365">
    <property type="entry name" value="Elong-fact-P_C"/>
</dbReference>
<dbReference type="InterPro" id="IPR012340">
    <property type="entry name" value="NA-bd_OB-fold"/>
</dbReference>
<dbReference type="InterPro" id="IPR014722">
    <property type="entry name" value="Rib_uL2_dom2"/>
</dbReference>
<dbReference type="InterPro" id="IPR020599">
    <property type="entry name" value="Transl_elong_fac_P/YeiP"/>
</dbReference>
<dbReference type="InterPro" id="IPR013185">
    <property type="entry name" value="Transl_elong_KOW-like"/>
</dbReference>
<dbReference type="InterPro" id="IPR011897">
    <property type="entry name" value="Transl_elong_p-like_YeiP"/>
</dbReference>
<dbReference type="InterPro" id="IPR001059">
    <property type="entry name" value="Transl_elong_P/YeiP_cen"/>
</dbReference>
<dbReference type="InterPro" id="IPR013852">
    <property type="entry name" value="Transl_elong_P/YeiP_CS"/>
</dbReference>
<dbReference type="InterPro" id="IPR008991">
    <property type="entry name" value="Translation_prot_SH3-like_sf"/>
</dbReference>
<dbReference type="NCBIfam" id="NF001810">
    <property type="entry name" value="PRK00529.1"/>
    <property type="match status" value="1"/>
</dbReference>
<dbReference type="NCBIfam" id="NF003392">
    <property type="entry name" value="PRK04542.1"/>
    <property type="match status" value="1"/>
</dbReference>
<dbReference type="PANTHER" id="PTHR30053">
    <property type="entry name" value="ELONGATION FACTOR P"/>
    <property type="match status" value="1"/>
</dbReference>
<dbReference type="PANTHER" id="PTHR30053:SF14">
    <property type="entry name" value="TRANSLATION ELONGATION FACTOR KOW-LIKE DOMAIN-CONTAINING PROTEIN"/>
    <property type="match status" value="1"/>
</dbReference>
<dbReference type="Pfam" id="PF01132">
    <property type="entry name" value="EFP"/>
    <property type="match status" value="1"/>
</dbReference>
<dbReference type="Pfam" id="PF08207">
    <property type="entry name" value="EFP_N"/>
    <property type="match status" value="1"/>
</dbReference>
<dbReference type="Pfam" id="PF09285">
    <property type="entry name" value="Elong-fact-P_C"/>
    <property type="match status" value="1"/>
</dbReference>
<dbReference type="PIRSF" id="PIRSF005901">
    <property type="entry name" value="EF-P"/>
    <property type="match status" value="1"/>
</dbReference>
<dbReference type="SMART" id="SM01185">
    <property type="entry name" value="EFP"/>
    <property type="match status" value="1"/>
</dbReference>
<dbReference type="SMART" id="SM00841">
    <property type="entry name" value="Elong-fact-P_C"/>
    <property type="match status" value="1"/>
</dbReference>
<dbReference type="SUPFAM" id="SSF50249">
    <property type="entry name" value="Nucleic acid-binding proteins"/>
    <property type="match status" value="2"/>
</dbReference>
<dbReference type="SUPFAM" id="SSF50104">
    <property type="entry name" value="Translation proteins SH3-like domain"/>
    <property type="match status" value="1"/>
</dbReference>
<dbReference type="PROSITE" id="PS01275">
    <property type="entry name" value="EFP"/>
    <property type="match status" value="1"/>
</dbReference>